<sequence>MSTSAQVPGGPAAQMKRRNNAQRQEAKASQRPTSTRSVGAGGSSSTMLKLYTDESQGLKVDPVVVMVLSLGFIFSVVALHILAKVSTKLLG</sequence>
<comment type="function">
    <text evidence="1">Necessary for protein translocation in the endoplasmic reticulum.</text>
</comment>
<comment type="subunit">
    <text evidence="1">Heterotrimeric complex composed of SEC61, SEB1 and SSS1.</text>
</comment>
<comment type="subcellular location">
    <subcellularLocation>
        <location evidence="1">Endoplasmic reticulum membrane</location>
        <topology evidence="1">Single-pass membrane protein</topology>
    </subcellularLocation>
</comment>
<comment type="similarity">
    <text evidence="4">Belongs to the SEC61-beta family.</text>
</comment>
<dbReference type="EMBL" id="AJ277554">
    <property type="protein sequence ID" value="CAC12697.1"/>
    <property type="molecule type" value="Genomic_DNA"/>
</dbReference>
<dbReference type="EMBL" id="CR382132">
    <property type="protein sequence ID" value="CAG77970.1"/>
    <property type="molecule type" value="Genomic_DNA"/>
</dbReference>
<dbReference type="RefSeq" id="XP_505163.1">
    <property type="nucleotide sequence ID" value="XM_505163.1"/>
</dbReference>
<dbReference type="FunCoup" id="Q9HFC7">
    <property type="interactions" value="129"/>
</dbReference>
<dbReference type="STRING" id="284591.Q9HFC7"/>
<dbReference type="EnsemblFungi" id="CAG77970">
    <property type="protein sequence ID" value="CAG77970"/>
    <property type="gene ID" value="YALI0_F08481g"/>
</dbReference>
<dbReference type="KEGG" id="yli:2908492"/>
<dbReference type="VEuPathDB" id="FungiDB:YALI0_F08481g"/>
<dbReference type="HOGENOM" id="CLU_133423_1_1_1"/>
<dbReference type="InParanoid" id="Q9HFC7"/>
<dbReference type="OMA" id="SSGMWRF"/>
<dbReference type="OrthoDB" id="84369at4891"/>
<dbReference type="Proteomes" id="UP000001300">
    <property type="component" value="Chromosome F"/>
</dbReference>
<dbReference type="GO" id="GO:0016020">
    <property type="term" value="C:membrane"/>
    <property type="evidence" value="ECO:0000318"/>
    <property type="project" value="GO_Central"/>
</dbReference>
<dbReference type="GO" id="GO:0005784">
    <property type="term" value="C:Sec61 translocon complex"/>
    <property type="evidence" value="ECO:0000318"/>
    <property type="project" value="GO_Central"/>
</dbReference>
<dbReference type="GO" id="GO:0005085">
    <property type="term" value="F:guanyl-nucleotide exchange factor activity"/>
    <property type="evidence" value="ECO:0000318"/>
    <property type="project" value="GO_Central"/>
</dbReference>
<dbReference type="GO" id="GO:0031204">
    <property type="term" value="P:post-translational protein targeting to membrane, translocation"/>
    <property type="evidence" value="ECO:0000318"/>
    <property type="project" value="GO_Central"/>
</dbReference>
<dbReference type="GO" id="GO:0006616">
    <property type="term" value="P:SRP-dependent cotranslational protein targeting to membrane, translocation"/>
    <property type="evidence" value="ECO:0000318"/>
    <property type="project" value="GO_Central"/>
</dbReference>
<dbReference type="InterPro" id="IPR030671">
    <property type="entry name" value="Sec61-beta/Sbh"/>
</dbReference>
<dbReference type="InterPro" id="IPR016482">
    <property type="entry name" value="SecG/Sec61-beta/Sbh"/>
</dbReference>
<dbReference type="PANTHER" id="PTHR13509">
    <property type="entry name" value="SEC61 SUBUNIT BETA"/>
    <property type="match status" value="1"/>
</dbReference>
<dbReference type="Pfam" id="PF03911">
    <property type="entry name" value="Sec61_beta"/>
    <property type="match status" value="1"/>
</dbReference>
<dbReference type="PIRSF" id="PIRSF006398">
    <property type="entry name" value="Sec61_beta_euk"/>
    <property type="match status" value="1"/>
</dbReference>
<keyword id="KW-0256">Endoplasmic reticulum</keyword>
<keyword id="KW-0472">Membrane</keyword>
<keyword id="KW-0653">Protein transport</keyword>
<keyword id="KW-1185">Reference proteome</keyword>
<keyword id="KW-0811">Translocation</keyword>
<keyword id="KW-0812">Transmembrane</keyword>
<keyword id="KW-1133">Transmembrane helix</keyword>
<keyword id="KW-0813">Transport</keyword>
<reference key="1">
    <citation type="submission" date="2000-05" db="EMBL/GenBank/DDBJ databases">
        <title>Sbh1p, a component of the translocon interacts with different partners in the yeast Yarrowia lipolytica.</title>
        <authorList>
            <person name="Boisrame A."/>
            <person name="Chasles M."/>
            <person name="Beckerich J.-M."/>
            <person name="Gaillardin C."/>
        </authorList>
    </citation>
    <scope>NUCLEOTIDE SEQUENCE [GENOMIC DNA]</scope>
</reference>
<reference key="2">
    <citation type="journal article" date="2004" name="Nature">
        <title>Genome evolution in yeasts.</title>
        <authorList>
            <person name="Dujon B."/>
            <person name="Sherman D."/>
            <person name="Fischer G."/>
            <person name="Durrens P."/>
            <person name="Casaregola S."/>
            <person name="Lafontaine I."/>
            <person name="de Montigny J."/>
            <person name="Marck C."/>
            <person name="Neuveglise C."/>
            <person name="Talla E."/>
            <person name="Goffard N."/>
            <person name="Frangeul L."/>
            <person name="Aigle M."/>
            <person name="Anthouard V."/>
            <person name="Babour A."/>
            <person name="Barbe V."/>
            <person name="Barnay S."/>
            <person name="Blanchin S."/>
            <person name="Beckerich J.-M."/>
            <person name="Beyne E."/>
            <person name="Bleykasten C."/>
            <person name="Boisrame A."/>
            <person name="Boyer J."/>
            <person name="Cattolico L."/>
            <person name="Confanioleri F."/>
            <person name="de Daruvar A."/>
            <person name="Despons L."/>
            <person name="Fabre E."/>
            <person name="Fairhead C."/>
            <person name="Ferry-Dumazet H."/>
            <person name="Groppi A."/>
            <person name="Hantraye F."/>
            <person name="Hennequin C."/>
            <person name="Jauniaux N."/>
            <person name="Joyet P."/>
            <person name="Kachouri R."/>
            <person name="Kerrest A."/>
            <person name="Koszul R."/>
            <person name="Lemaire M."/>
            <person name="Lesur I."/>
            <person name="Ma L."/>
            <person name="Muller H."/>
            <person name="Nicaud J.-M."/>
            <person name="Nikolski M."/>
            <person name="Oztas S."/>
            <person name="Ozier-Kalogeropoulos O."/>
            <person name="Pellenz S."/>
            <person name="Potier S."/>
            <person name="Richard G.-F."/>
            <person name="Straub M.-L."/>
            <person name="Suleau A."/>
            <person name="Swennen D."/>
            <person name="Tekaia F."/>
            <person name="Wesolowski-Louvel M."/>
            <person name="Westhof E."/>
            <person name="Wirth B."/>
            <person name="Zeniou-Meyer M."/>
            <person name="Zivanovic Y."/>
            <person name="Bolotin-Fukuhara M."/>
            <person name="Thierry A."/>
            <person name="Bouchier C."/>
            <person name="Caudron B."/>
            <person name="Scarpelli C."/>
            <person name="Gaillardin C."/>
            <person name="Weissenbach J."/>
            <person name="Wincker P."/>
            <person name="Souciet J.-L."/>
        </authorList>
    </citation>
    <scope>NUCLEOTIDE SEQUENCE [LARGE SCALE GENOMIC DNA]</scope>
    <source>
        <strain>CLIB 122 / E 150</strain>
    </source>
</reference>
<gene>
    <name type="primary">SBH1</name>
    <name type="ordered locus">YALI0F08481g</name>
</gene>
<feature type="chain" id="PRO_0000157260" description="Protein transport protein Sec61 subunit beta">
    <location>
        <begin position="1"/>
        <end position="91"/>
    </location>
</feature>
<feature type="topological domain" description="Cytoplasmic" evidence="2">
    <location>
        <begin position="1"/>
        <end position="62"/>
    </location>
</feature>
<feature type="transmembrane region" description="Helical" evidence="2">
    <location>
        <begin position="63"/>
        <end position="83"/>
    </location>
</feature>
<feature type="region of interest" description="Disordered" evidence="3">
    <location>
        <begin position="1"/>
        <end position="45"/>
    </location>
</feature>
<feature type="compositionally biased region" description="Polar residues" evidence="3">
    <location>
        <begin position="30"/>
        <end position="45"/>
    </location>
</feature>
<protein>
    <recommendedName>
        <fullName>Protein transport protein Sec61 subunit beta</fullName>
    </recommendedName>
</protein>
<name>SC61B_YARLI</name>
<proteinExistence type="inferred from homology"/>
<organism>
    <name type="scientific">Yarrowia lipolytica (strain CLIB 122 / E 150)</name>
    <name type="common">Yeast</name>
    <name type="synonym">Candida lipolytica</name>
    <dbReference type="NCBI Taxonomy" id="284591"/>
    <lineage>
        <taxon>Eukaryota</taxon>
        <taxon>Fungi</taxon>
        <taxon>Dikarya</taxon>
        <taxon>Ascomycota</taxon>
        <taxon>Saccharomycotina</taxon>
        <taxon>Dipodascomycetes</taxon>
        <taxon>Dipodascales</taxon>
        <taxon>Dipodascales incertae sedis</taxon>
        <taxon>Yarrowia</taxon>
    </lineage>
</organism>
<evidence type="ECO:0000250" key="1"/>
<evidence type="ECO:0000255" key="2"/>
<evidence type="ECO:0000256" key="3">
    <source>
        <dbReference type="SAM" id="MobiDB-lite"/>
    </source>
</evidence>
<evidence type="ECO:0000305" key="4"/>
<accession>Q9HFC7</accession>